<proteinExistence type="inferred from homology"/>
<accession>Q5NRM1</accession>
<name>CYSJ_ZYMMO</name>
<reference key="1">
    <citation type="journal article" date="2005" name="Nat. Biotechnol.">
        <title>The genome sequence of the ethanologenic bacterium Zymomonas mobilis ZM4.</title>
        <authorList>
            <person name="Seo J.-S."/>
            <person name="Chong H."/>
            <person name="Park H.S."/>
            <person name="Yoon K.-O."/>
            <person name="Jung C."/>
            <person name="Kim J.J."/>
            <person name="Hong J.H."/>
            <person name="Kim H."/>
            <person name="Kim J.-H."/>
            <person name="Kil J.-I."/>
            <person name="Park C.J."/>
            <person name="Oh H.-M."/>
            <person name="Lee J.-S."/>
            <person name="Jin S.-J."/>
            <person name="Um H.-W."/>
            <person name="Lee H.-J."/>
            <person name="Oh S.-J."/>
            <person name="Kim J.Y."/>
            <person name="Kang H.L."/>
            <person name="Lee S.Y."/>
            <person name="Lee K.J."/>
            <person name="Kang H.S."/>
        </authorList>
    </citation>
    <scope>NUCLEOTIDE SEQUENCE [LARGE SCALE GENOMIC DNA]</scope>
    <source>
        <strain>ATCC 31821 / ZM4 / CP4</strain>
    </source>
</reference>
<comment type="function">
    <text evidence="1">Component of the sulfite reductase complex that catalyzes the 6-electron reduction of sulfite to sulfide. This is one of several activities required for the biosynthesis of L-cysteine from sulfate. The flavoprotein component catalyzes the electron flow from NADPH -&gt; FAD -&gt; FMN to the hemoprotein component.</text>
</comment>
<comment type="catalytic activity">
    <reaction evidence="1">
        <text>hydrogen sulfide + 3 NADP(+) + 3 H2O = sulfite + 3 NADPH + 4 H(+)</text>
        <dbReference type="Rhea" id="RHEA:13801"/>
        <dbReference type="ChEBI" id="CHEBI:15377"/>
        <dbReference type="ChEBI" id="CHEBI:15378"/>
        <dbReference type="ChEBI" id="CHEBI:17359"/>
        <dbReference type="ChEBI" id="CHEBI:29919"/>
        <dbReference type="ChEBI" id="CHEBI:57783"/>
        <dbReference type="ChEBI" id="CHEBI:58349"/>
        <dbReference type="EC" id="1.8.1.2"/>
    </reaction>
</comment>
<comment type="cofactor">
    <cofactor evidence="1">
        <name>FAD</name>
        <dbReference type="ChEBI" id="CHEBI:57692"/>
    </cofactor>
    <text evidence="1">Binds 1 FAD per subunit.</text>
</comment>
<comment type="cofactor">
    <cofactor evidence="1">
        <name>FMN</name>
        <dbReference type="ChEBI" id="CHEBI:58210"/>
    </cofactor>
    <text evidence="1">Binds 1 FMN per subunit.</text>
</comment>
<comment type="pathway">
    <text evidence="1">Sulfur metabolism; hydrogen sulfide biosynthesis; hydrogen sulfide from sulfite (NADPH route): step 1/1.</text>
</comment>
<comment type="subunit">
    <text evidence="1">Alpha(8)-beta(8). The alpha component is a flavoprotein, the beta component is a hemoprotein.</text>
</comment>
<comment type="similarity">
    <text evidence="1">Belongs to the NADPH-dependent sulphite reductase flavoprotein subunit CysJ family.</text>
</comment>
<comment type="similarity">
    <text evidence="1">In the N-terminal section; belongs to the flavodoxin family.</text>
</comment>
<comment type="similarity">
    <text evidence="1">In the C-terminal section; belongs to the flavoprotein pyridine nucleotide cytochrome reductase family.</text>
</comment>
<organism>
    <name type="scientific">Zymomonas mobilis subsp. mobilis (strain ATCC 31821 / ZM4 / CP4)</name>
    <dbReference type="NCBI Taxonomy" id="264203"/>
    <lineage>
        <taxon>Bacteria</taxon>
        <taxon>Pseudomonadati</taxon>
        <taxon>Pseudomonadota</taxon>
        <taxon>Alphaproteobacteria</taxon>
        <taxon>Sphingomonadales</taxon>
        <taxon>Zymomonadaceae</taxon>
        <taxon>Zymomonas</taxon>
    </lineage>
</organism>
<keyword id="KW-0028">Amino-acid biosynthesis</keyword>
<keyword id="KW-0198">Cysteine biosynthesis</keyword>
<keyword id="KW-0249">Electron transport</keyword>
<keyword id="KW-0274">FAD</keyword>
<keyword id="KW-0285">Flavoprotein</keyword>
<keyword id="KW-0288">FMN</keyword>
<keyword id="KW-0521">NADP</keyword>
<keyword id="KW-0560">Oxidoreductase</keyword>
<keyword id="KW-1185">Reference proteome</keyword>
<keyword id="KW-0813">Transport</keyword>
<sequence>MTNEASLTPIPLPAEKLAQLQTVTNGLSTAQIAWISGYLWGRSSGADTTNQSLPTSPATEQPVEPTVITILSASQTGNARRIAEELRDDLLAAHLKVNLINTGDYKFKQIDREKIILMVTSTQGEGEPPEEAVAFYKFLFSKKAPKLTHTAFAVFGLGDITYEHFAQAGNDFDRRFEELGGERLLPRVDADVDYEEAAEAWRKEVTELLEKRVPSANSAQIAATAISPVDEVSSTPYDKESPLTATLSVNQKITGRHSDKDVRHIEIDLGDSGLHYKPGDALGVWYENDPALIRECLDLLGLSGEESIKVNDKILPLAQALQQSFELTVNNTRLVESYATLTQNKALEKIISDKAALQDYAQNTPIVDMIRQAGGKLTAEQFVSLLRPLTPRLYSIASSQAEVENEVHLTVGVVRYEIDGHKRAGGASSFLADRLAENGNLRVFVEHNDNFRLPDNPDAPVIMIGPGTGVAPFRAFMQQRDNDGAKGKNWLFFGNPHFIEDFLYQVEWQAYVKQGLLTHIDLAWSRDQAKKVYVQDKLREKAAEIWKWIKEDGAYLYVCGDATHMAKDVDKALIDIIRQEGGMDEEAADEFLTELRLERRYQRDVY</sequence>
<feature type="chain" id="PRO_0000199946" description="Sulfite reductase [NADPH] flavoprotein alpha-component">
    <location>
        <begin position="1"/>
        <end position="606"/>
    </location>
</feature>
<feature type="domain" description="Flavodoxin-like" evidence="1">
    <location>
        <begin position="68"/>
        <end position="206"/>
    </location>
</feature>
<feature type="domain" description="FAD-binding FR-type" evidence="1">
    <location>
        <begin position="240"/>
        <end position="454"/>
    </location>
</feature>
<feature type="binding site" evidence="1">
    <location>
        <begin position="74"/>
        <end position="79"/>
    </location>
    <ligand>
        <name>FMN</name>
        <dbReference type="ChEBI" id="CHEBI:58210"/>
    </ligand>
</feature>
<feature type="binding site" evidence="1">
    <location>
        <begin position="121"/>
        <end position="124"/>
    </location>
    <ligand>
        <name>FMN</name>
        <dbReference type="ChEBI" id="CHEBI:58210"/>
    </ligand>
</feature>
<feature type="binding site" evidence="1">
    <location>
        <begin position="157"/>
        <end position="166"/>
    </location>
    <ligand>
        <name>FMN</name>
        <dbReference type="ChEBI" id="CHEBI:58210"/>
    </ligand>
</feature>
<feature type="binding site" evidence="1">
    <location>
        <position position="328"/>
    </location>
    <ligand>
        <name>FAD</name>
        <dbReference type="ChEBI" id="CHEBI:57692"/>
    </ligand>
</feature>
<feature type="binding site" evidence="1">
    <location>
        <position position="362"/>
    </location>
    <ligand>
        <name>FAD</name>
        <dbReference type="ChEBI" id="CHEBI:57692"/>
    </ligand>
</feature>
<feature type="binding site" evidence="1">
    <location>
        <begin position="392"/>
        <end position="395"/>
    </location>
    <ligand>
        <name>FAD</name>
        <dbReference type="ChEBI" id="CHEBI:57692"/>
    </ligand>
</feature>
<feature type="binding site" evidence="1">
    <location>
        <begin position="410"/>
        <end position="412"/>
    </location>
    <ligand>
        <name>FAD</name>
        <dbReference type="ChEBI" id="CHEBI:57692"/>
    </ligand>
</feature>
<feature type="binding site" evidence="1">
    <location>
        <position position="416"/>
    </location>
    <ligand>
        <name>FAD</name>
        <dbReference type="ChEBI" id="CHEBI:57692"/>
    </ligand>
</feature>
<feature type="binding site" evidence="1">
    <location>
        <begin position="425"/>
        <end position="428"/>
    </location>
    <ligand>
        <name>FAD</name>
        <dbReference type="ChEBI" id="CHEBI:57692"/>
    </ligand>
</feature>
<feature type="binding site" evidence="1">
    <location>
        <begin position="525"/>
        <end position="526"/>
    </location>
    <ligand>
        <name>NADP(+)</name>
        <dbReference type="ChEBI" id="CHEBI:58349"/>
    </ligand>
</feature>
<feature type="binding site" evidence="1">
    <location>
        <begin position="531"/>
        <end position="535"/>
    </location>
    <ligand>
        <name>NADP(+)</name>
        <dbReference type="ChEBI" id="CHEBI:58349"/>
    </ligand>
</feature>
<feature type="binding site" evidence="1">
    <location>
        <position position="568"/>
    </location>
    <ligand>
        <name>NADP(+)</name>
        <dbReference type="ChEBI" id="CHEBI:58349"/>
    </ligand>
</feature>
<feature type="binding site" evidence="1">
    <location>
        <position position="606"/>
    </location>
    <ligand>
        <name>FAD</name>
        <dbReference type="ChEBI" id="CHEBI:57692"/>
    </ligand>
</feature>
<evidence type="ECO:0000255" key="1">
    <source>
        <dbReference type="HAMAP-Rule" id="MF_01541"/>
    </source>
</evidence>
<gene>
    <name evidence="1" type="primary">cysJ</name>
    <name type="ordered locus">ZMO0009</name>
</gene>
<protein>
    <recommendedName>
        <fullName evidence="1">Sulfite reductase [NADPH] flavoprotein alpha-component</fullName>
        <shortName evidence="1">SiR-FP</shortName>
        <ecNumber evidence="1">1.8.1.2</ecNumber>
    </recommendedName>
</protein>
<dbReference type="EC" id="1.8.1.2" evidence="1"/>
<dbReference type="EMBL" id="AE008692">
    <property type="protein sequence ID" value="AAV88633.1"/>
    <property type="molecule type" value="Genomic_DNA"/>
</dbReference>
<dbReference type="RefSeq" id="WP_011239997.1">
    <property type="nucleotide sequence ID" value="NZ_CP035711.1"/>
</dbReference>
<dbReference type="SMR" id="Q5NRM1"/>
<dbReference type="STRING" id="264203.ZMO0009"/>
<dbReference type="KEGG" id="zmo:ZMO0009"/>
<dbReference type="eggNOG" id="COG0369">
    <property type="taxonomic scope" value="Bacteria"/>
</dbReference>
<dbReference type="HOGENOM" id="CLU_001570_17_7_5"/>
<dbReference type="UniPathway" id="UPA00140">
    <property type="reaction ID" value="UER00207"/>
</dbReference>
<dbReference type="Proteomes" id="UP000001173">
    <property type="component" value="Chromosome"/>
</dbReference>
<dbReference type="GO" id="GO:0005829">
    <property type="term" value="C:cytosol"/>
    <property type="evidence" value="ECO:0007669"/>
    <property type="project" value="TreeGrafter"/>
</dbReference>
<dbReference type="GO" id="GO:0050660">
    <property type="term" value="F:flavin adenine dinucleotide binding"/>
    <property type="evidence" value="ECO:0007669"/>
    <property type="project" value="InterPro"/>
</dbReference>
<dbReference type="GO" id="GO:0010181">
    <property type="term" value="F:FMN binding"/>
    <property type="evidence" value="ECO:0007669"/>
    <property type="project" value="InterPro"/>
</dbReference>
<dbReference type="GO" id="GO:0004783">
    <property type="term" value="F:sulfite reductase (NADPH) activity"/>
    <property type="evidence" value="ECO:0007669"/>
    <property type="project" value="UniProtKB-UniRule"/>
</dbReference>
<dbReference type="GO" id="GO:0019344">
    <property type="term" value="P:cysteine biosynthetic process"/>
    <property type="evidence" value="ECO:0007669"/>
    <property type="project" value="UniProtKB-KW"/>
</dbReference>
<dbReference type="GO" id="GO:0070814">
    <property type="term" value="P:hydrogen sulfide biosynthetic process"/>
    <property type="evidence" value="ECO:0007669"/>
    <property type="project" value="UniProtKB-UniRule"/>
</dbReference>
<dbReference type="GO" id="GO:0000103">
    <property type="term" value="P:sulfate assimilation"/>
    <property type="evidence" value="ECO:0007669"/>
    <property type="project" value="UniProtKB-UniRule"/>
</dbReference>
<dbReference type="CDD" id="cd06199">
    <property type="entry name" value="SiR"/>
    <property type="match status" value="1"/>
</dbReference>
<dbReference type="FunFam" id="3.40.50.80:FF:000001">
    <property type="entry name" value="NADPH--cytochrome P450 reductase 1"/>
    <property type="match status" value="1"/>
</dbReference>
<dbReference type="FunFam" id="1.20.990.10:FF:000004">
    <property type="entry name" value="Sulfite reductase [NADPH] flavoprotein alpha-component"/>
    <property type="match status" value="1"/>
</dbReference>
<dbReference type="FunFam" id="3.40.50.360:FF:000018">
    <property type="entry name" value="Sulfite reductase [NADPH] flavoprotein alpha-component"/>
    <property type="match status" value="1"/>
</dbReference>
<dbReference type="Gene3D" id="3.40.50.360">
    <property type="match status" value="1"/>
</dbReference>
<dbReference type="Gene3D" id="1.20.990.10">
    <property type="entry name" value="NADPH-cytochrome p450 Reductase, Chain A, domain 3"/>
    <property type="match status" value="1"/>
</dbReference>
<dbReference type="Gene3D" id="3.40.50.80">
    <property type="entry name" value="Nucleotide-binding domain of ferredoxin-NADP reductase (FNR) module"/>
    <property type="match status" value="1"/>
</dbReference>
<dbReference type="Gene3D" id="2.40.30.10">
    <property type="entry name" value="Translation factors"/>
    <property type="match status" value="1"/>
</dbReference>
<dbReference type="HAMAP" id="MF_01541">
    <property type="entry name" value="CysJ"/>
    <property type="match status" value="1"/>
</dbReference>
<dbReference type="InterPro" id="IPR010199">
    <property type="entry name" value="CysJ"/>
</dbReference>
<dbReference type="InterPro" id="IPR003097">
    <property type="entry name" value="CysJ-like_FAD-binding"/>
</dbReference>
<dbReference type="InterPro" id="IPR029758">
    <property type="entry name" value="CysJ_Proteobact"/>
</dbReference>
<dbReference type="InterPro" id="IPR017927">
    <property type="entry name" value="FAD-bd_FR_type"/>
</dbReference>
<dbReference type="InterPro" id="IPR001094">
    <property type="entry name" value="Flavdoxin-like"/>
</dbReference>
<dbReference type="InterPro" id="IPR008254">
    <property type="entry name" value="Flavodoxin/NO_synth"/>
</dbReference>
<dbReference type="InterPro" id="IPR001709">
    <property type="entry name" value="Flavoprot_Pyr_Nucl_cyt_Rdtase"/>
</dbReference>
<dbReference type="InterPro" id="IPR029039">
    <property type="entry name" value="Flavoprotein-like_sf"/>
</dbReference>
<dbReference type="InterPro" id="IPR039261">
    <property type="entry name" value="FNR_nucleotide-bd"/>
</dbReference>
<dbReference type="InterPro" id="IPR023173">
    <property type="entry name" value="NADPH_Cyt_P450_Rdtase_alpha"/>
</dbReference>
<dbReference type="InterPro" id="IPR001433">
    <property type="entry name" value="OxRdtase_FAD/NAD-bd"/>
</dbReference>
<dbReference type="InterPro" id="IPR017938">
    <property type="entry name" value="Riboflavin_synthase-like_b-brl"/>
</dbReference>
<dbReference type="NCBIfam" id="TIGR01931">
    <property type="entry name" value="cysJ"/>
    <property type="match status" value="1"/>
</dbReference>
<dbReference type="NCBIfam" id="NF008197">
    <property type="entry name" value="PRK10953.1"/>
    <property type="match status" value="1"/>
</dbReference>
<dbReference type="PANTHER" id="PTHR19384:SF128">
    <property type="entry name" value="NADPH OXIDOREDUCTASE A"/>
    <property type="match status" value="1"/>
</dbReference>
<dbReference type="PANTHER" id="PTHR19384">
    <property type="entry name" value="NITRIC OXIDE SYNTHASE-RELATED"/>
    <property type="match status" value="1"/>
</dbReference>
<dbReference type="Pfam" id="PF00667">
    <property type="entry name" value="FAD_binding_1"/>
    <property type="match status" value="1"/>
</dbReference>
<dbReference type="Pfam" id="PF00258">
    <property type="entry name" value="Flavodoxin_1"/>
    <property type="match status" value="1"/>
</dbReference>
<dbReference type="Pfam" id="PF00175">
    <property type="entry name" value="NAD_binding_1"/>
    <property type="match status" value="1"/>
</dbReference>
<dbReference type="PIRSF" id="PIRSF000207">
    <property type="entry name" value="SiR-FP_CysJ"/>
    <property type="match status" value="1"/>
</dbReference>
<dbReference type="PRINTS" id="PR00369">
    <property type="entry name" value="FLAVODOXIN"/>
</dbReference>
<dbReference type="PRINTS" id="PR00371">
    <property type="entry name" value="FPNCR"/>
</dbReference>
<dbReference type="SUPFAM" id="SSF52343">
    <property type="entry name" value="Ferredoxin reductase-like, C-terminal NADP-linked domain"/>
    <property type="match status" value="1"/>
</dbReference>
<dbReference type="SUPFAM" id="SSF52218">
    <property type="entry name" value="Flavoproteins"/>
    <property type="match status" value="1"/>
</dbReference>
<dbReference type="SUPFAM" id="SSF63380">
    <property type="entry name" value="Riboflavin synthase domain-like"/>
    <property type="match status" value="1"/>
</dbReference>
<dbReference type="PROSITE" id="PS51384">
    <property type="entry name" value="FAD_FR"/>
    <property type="match status" value="1"/>
</dbReference>
<dbReference type="PROSITE" id="PS50902">
    <property type="entry name" value="FLAVODOXIN_LIKE"/>
    <property type="match status" value="1"/>
</dbReference>